<reference key="1">
    <citation type="journal article" date="2004" name="Virology">
        <title>Comparative genomic analyses of frog virus 3, type species of the genus Ranavirus (family Iridoviridae).</title>
        <authorList>
            <person name="Tan W.G."/>
            <person name="Barkman T.J."/>
            <person name="Gregory Chinchar V."/>
            <person name="Essani K."/>
        </authorList>
    </citation>
    <scope>NUCLEOTIDE SEQUENCE [LARGE SCALE GENOMIC DNA]</scope>
</reference>
<keyword id="KW-0175">Coiled coil</keyword>
<keyword id="KW-1185">Reference proteome</keyword>
<proteinExistence type="predicted"/>
<feature type="chain" id="PRO_0000410514" description="Uncharacterized protein 079R">
    <location>
        <begin position="1"/>
        <end position="572"/>
    </location>
</feature>
<feature type="region of interest" description="Disordered" evidence="2">
    <location>
        <begin position="13"/>
        <end position="45"/>
    </location>
</feature>
<feature type="coiled-coil region" evidence="1">
    <location>
        <begin position="177"/>
        <end position="204"/>
    </location>
</feature>
<accession>Q6GZP6</accession>
<dbReference type="EMBL" id="AY548484">
    <property type="protein sequence ID" value="AAT09739.1"/>
    <property type="molecule type" value="Genomic_DNA"/>
</dbReference>
<dbReference type="RefSeq" id="YP_031658.1">
    <property type="nucleotide sequence ID" value="NC_005946.1"/>
</dbReference>
<dbReference type="KEGG" id="vg:2947798"/>
<dbReference type="Proteomes" id="UP000008770">
    <property type="component" value="Segment"/>
</dbReference>
<organismHost>
    <name type="scientific">Dryophytes versicolor</name>
    <name type="common">chameleon treefrog</name>
    <dbReference type="NCBI Taxonomy" id="30343"/>
</organismHost>
<organismHost>
    <name type="scientific">Lithobates pipiens</name>
    <name type="common">Northern leopard frog</name>
    <name type="synonym">Rana pipiens</name>
    <dbReference type="NCBI Taxonomy" id="8404"/>
</organismHost>
<organismHost>
    <name type="scientific">Lithobates sylvaticus</name>
    <name type="common">Wood frog</name>
    <name type="synonym">Rana sylvatica</name>
    <dbReference type="NCBI Taxonomy" id="45438"/>
</organismHost>
<organismHost>
    <name type="scientific">Notophthalmus viridescens</name>
    <name type="common">Eastern newt</name>
    <name type="synonym">Triturus viridescens</name>
    <dbReference type="NCBI Taxonomy" id="8316"/>
</organismHost>
<sequence length="572" mass="63649">MLDMRSMVTVHPALIAKPKGKTVSGDGADPKKRGRPKKNATEPAVRNPVTRAGVTRYMNPLVESLVRDNPFRGDNLVKESLLGQTLAEQTLVRANSRDNLLKESLVEQSFVDQTLQDQSLVDQSILRESLLRDNPRDTLRKESLRKYNSRANPLAESLLEESTTPKPRRGAHRKPLVLTKEMEEKLEALDRDMRTAEETKVSIAGSAGIPVTALPGMEALGVMQMVSSLGFLDAGDKPNVIKTMVVKYLDVFLSMGCSAPKPCLVNVPRGYRRFKQSSSVSPAYAAKLSSEDTEAWSGAAGVAVEAKMRHTAAVLESRNLSLEPYGSNPIKLERSALAAYMELMSMAEEAEGEDLEGIISDCRVLRTSTEWCRDLSQTVSSWWPPLREAISRRGTALSDYVSDREVDVIRGRSRVPALSCVLLYGKRVDDNDAPLTAPQTVLKPFDVTDYSRRLGGVWLHHARFPEYAPKRLFDPRPGAEPVLIRTCAGYLMTEERGPLRCWRKDAHMYQISLEIYNRLTTELNAVPPQTRCGRYNAKWLSTNGPTGVQKIVLAAARALTEPRLSWNDVFEV</sequence>
<evidence type="ECO:0000255" key="1"/>
<evidence type="ECO:0000256" key="2">
    <source>
        <dbReference type="SAM" id="MobiDB-lite"/>
    </source>
</evidence>
<organism>
    <name type="scientific">Frog virus 3 (isolate Goorha)</name>
    <name type="common">FV-3</name>
    <dbReference type="NCBI Taxonomy" id="654924"/>
    <lineage>
        <taxon>Viruses</taxon>
        <taxon>Varidnaviria</taxon>
        <taxon>Bamfordvirae</taxon>
        <taxon>Nucleocytoviricota</taxon>
        <taxon>Megaviricetes</taxon>
        <taxon>Pimascovirales</taxon>
        <taxon>Iridoviridae</taxon>
        <taxon>Alphairidovirinae</taxon>
        <taxon>Ranavirus</taxon>
        <taxon>Frog virus 3</taxon>
    </lineage>
</organism>
<gene>
    <name type="ORF">FV3-079R</name>
</gene>
<protein>
    <recommendedName>
        <fullName>Uncharacterized protein 079R</fullName>
    </recommendedName>
</protein>
<name>079R_FRG3G</name>